<accession>Q816Q7</accession>
<protein>
    <recommendedName>
        <fullName evidence="1">Phosphoenolpyruvate carboxykinase (ATP)</fullName>
        <shortName evidence="1">PCK</shortName>
        <shortName evidence="1">PEP carboxykinase</shortName>
        <shortName evidence="1">PEPCK</shortName>
        <ecNumber evidence="1">4.1.1.49</ecNumber>
    </recommendedName>
</protein>
<keyword id="KW-0067">ATP-binding</keyword>
<keyword id="KW-0963">Cytoplasm</keyword>
<keyword id="KW-0210">Decarboxylase</keyword>
<keyword id="KW-0312">Gluconeogenesis</keyword>
<keyword id="KW-0456">Lyase</keyword>
<keyword id="KW-0464">Manganese</keyword>
<keyword id="KW-0479">Metal-binding</keyword>
<keyword id="KW-0547">Nucleotide-binding</keyword>
<keyword id="KW-1185">Reference proteome</keyword>
<comment type="function">
    <text evidence="1">Involved in the gluconeogenesis. Catalyzes the conversion of oxaloacetate (OAA) to phosphoenolpyruvate (PEP) through direct phosphoryl transfer between the nucleoside triphosphate and OAA.</text>
</comment>
<comment type="catalytic activity">
    <reaction evidence="1">
        <text>oxaloacetate + ATP = phosphoenolpyruvate + ADP + CO2</text>
        <dbReference type="Rhea" id="RHEA:18617"/>
        <dbReference type="ChEBI" id="CHEBI:16452"/>
        <dbReference type="ChEBI" id="CHEBI:16526"/>
        <dbReference type="ChEBI" id="CHEBI:30616"/>
        <dbReference type="ChEBI" id="CHEBI:58702"/>
        <dbReference type="ChEBI" id="CHEBI:456216"/>
        <dbReference type="EC" id="4.1.1.49"/>
    </reaction>
</comment>
<comment type="cofactor">
    <cofactor evidence="1">
        <name>Mn(2+)</name>
        <dbReference type="ChEBI" id="CHEBI:29035"/>
    </cofactor>
    <text evidence="1">Binds 1 Mn(2+) ion per subunit.</text>
</comment>
<comment type="pathway">
    <text evidence="1">Carbohydrate biosynthesis; gluconeogenesis.</text>
</comment>
<comment type="subcellular location">
    <subcellularLocation>
        <location evidence="1">Cytoplasm</location>
    </subcellularLocation>
</comment>
<comment type="similarity">
    <text evidence="1">Belongs to the phosphoenolpyruvate carboxykinase (ATP) family.</text>
</comment>
<sequence>MSTVNVQIGLHELLNGSNAQIQLSVPQLVEKVLMRNEGKLTSTGAVSASTGKYTGRSPKDKFIVKEASVADKIAWGAVNQPISEEHFNKLYTKVLEYLKEKEELFVFKGFAGADRNYRLPIQVINEYAWHNLFVHQLFIRPTEEELTTHESEFTIVSAPNFKADPAVDGTNSEAFIMVSFEKRIVLIGGTEYAGEMKKSIFSIMNFLLPEQDILSMHCSANVGEEGDVALFFGLSGTGKTTLSADPNRKLIGDDEHGWSDNGVFNIEGGCYAKCVNLSHEKEPQIFDAITFGSVLENVIINDQTRIADYNDTTLTENTRAAYPMHAIDNIVLPSVAGHPNTIIFLTADASGVLPPISKLSKEQAMYHFLSGYTSKLAGTERGVTSPQATFSTCFGSPFLPLDASRYAEMLGEKIEKHDAKVFLVNTGWTGGEYGVGKRMNLGYTRAMIQAALNGELAKTETAKHDIFGLEVPLHVPGVPDEVLMPEQTWADKAAYKAKAIELANEFKANFKKFDSVSEDIINLGGPIA</sequence>
<name>PCKA_BACCR</name>
<evidence type="ECO:0000255" key="1">
    <source>
        <dbReference type="HAMAP-Rule" id="MF_00453"/>
    </source>
</evidence>
<proteinExistence type="inferred from homology"/>
<organism>
    <name type="scientific">Bacillus cereus (strain ATCC 14579 / DSM 31 / CCUG 7414 / JCM 2152 / NBRC 15305 / NCIMB 9373 / NCTC 2599 / NRRL B-3711)</name>
    <dbReference type="NCBI Taxonomy" id="226900"/>
    <lineage>
        <taxon>Bacteria</taxon>
        <taxon>Bacillati</taxon>
        <taxon>Bacillota</taxon>
        <taxon>Bacilli</taxon>
        <taxon>Bacillales</taxon>
        <taxon>Bacillaceae</taxon>
        <taxon>Bacillus</taxon>
        <taxon>Bacillus cereus group</taxon>
    </lineage>
</organism>
<gene>
    <name evidence="1" type="primary">pckA</name>
    <name type="ordered locus">BC_4762</name>
</gene>
<reference key="1">
    <citation type="journal article" date="2003" name="Nature">
        <title>Genome sequence of Bacillus cereus and comparative analysis with Bacillus anthracis.</title>
        <authorList>
            <person name="Ivanova N."/>
            <person name="Sorokin A."/>
            <person name="Anderson I."/>
            <person name="Galleron N."/>
            <person name="Candelon B."/>
            <person name="Kapatral V."/>
            <person name="Bhattacharyya A."/>
            <person name="Reznik G."/>
            <person name="Mikhailova N."/>
            <person name="Lapidus A."/>
            <person name="Chu L."/>
            <person name="Mazur M."/>
            <person name="Goltsman E."/>
            <person name="Larsen N."/>
            <person name="D'Souza M."/>
            <person name="Walunas T."/>
            <person name="Grechkin Y."/>
            <person name="Pusch G."/>
            <person name="Haselkorn R."/>
            <person name="Fonstein M."/>
            <person name="Ehrlich S.D."/>
            <person name="Overbeek R."/>
            <person name="Kyrpides N.C."/>
        </authorList>
    </citation>
    <scope>NUCLEOTIDE SEQUENCE [LARGE SCALE GENOMIC DNA]</scope>
    <source>
        <strain>ATCC 14579 / DSM 31 / CCUG 7414 / JCM 2152 / NBRC 15305 / NCIMB 9373 / NCTC 2599 / NRRL B-3711</strain>
    </source>
</reference>
<dbReference type="EC" id="4.1.1.49" evidence="1"/>
<dbReference type="EMBL" id="AE016877">
    <property type="protein sequence ID" value="AAP11667.1"/>
    <property type="molecule type" value="Genomic_DNA"/>
</dbReference>
<dbReference type="RefSeq" id="NP_834466.1">
    <property type="nucleotide sequence ID" value="NC_004722.1"/>
</dbReference>
<dbReference type="RefSeq" id="WP_000108802.1">
    <property type="nucleotide sequence ID" value="NZ_CP138336.1"/>
</dbReference>
<dbReference type="SMR" id="Q816Q7"/>
<dbReference type="STRING" id="226900.BC_4762"/>
<dbReference type="GeneID" id="72451423"/>
<dbReference type="KEGG" id="bce:BC4762"/>
<dbReference type="PATRIC" id="fig|226900.8.peg.4925"/>
<dbReference type="HOGENOM" id="CLU_018247_0_1_9"/>
<dbReference type="OrthoDB" id="9806325at2"/>
<dbReference type="UniPathway" id="UPA00138"/>
<dbReference type="Proteomes" id="UP000001417">
    <property type="component" value="Chromosome"/>
</dbReference>
<dbReference type="GO" id="GO:0005829">
    <property type="term" value="C:cytosol"/>
    <property type="evidence" value="ECO:0000318"/>
    <property type="project" value="GO_Central"/>
</dbReference>
<dbReference type="GO" id="GO:0005524">
    <property type="term" value="F:ATP binding"/>
    <property type="evidence" value="ECO:0007669"/>
    <property type="project" value="UniProtKB-UniRule"/>
</dbReference>
<dbReference type="GO" id="GO:0046872">
    <property type="term" value="F:metal ion binding"/>
    <property type="evidence" value="ECO:0007669"/>
    <property type="project" value="UniProtKB-KW"/>
</dbReference>
<dbReference type="GO" id="GO:0004612">
    <property type="term" value="F:phosphoenolpyruvate carboxykinase (ATP) activity"/>
    <property type="evidence" value="ECO:0000318"/>
    <property type="project" value="GO_Central"/>
</dbReference>
<dbReference type="GO" id="GO:0006094">
    <property type="term" value="P:gluconeogenesis"/>
    <property type="evidence" value="ECO:0000318"/>
    <property type="project" value="GO_Central"/>
</dbReference>
<dbReference type="CDD" id="cd00484">
    <property type="entry name" value="PEPCK_ATP"/>
    <property type="match status" value="1"/>
</dbReference>
<dbReference type="FunFam" id="2.170.8.10:FF:000001">
    <property type="entry name" value="Phosphoenolpyruvate carboxykinase (ATP)"/>
    <property type="match status" value="1"/>
</dbReference>
<dbReference type="FunFam" id="3.40.449.10:FF:000001">
    <property type="entry name" value="Phosphoenolpyruvate carboxykinase (ATP)"/>
    <property type="match status" value="1"/>
</dbReference>
<dbReference type="Gene3D" id="3.90.228.20">
    <property type="match status" value="1"/>
</dbReference>
<dbReference type="Gene3D" id="3.40.449.10">
    <property type="entry name" value="Phosphoenolpyruvate Carboxykinase, domain 1"/>
    <property type="match status" value="1"/>
</dbReference>
<dbReference type="Gene3D" id="2.170.8.10">
    <property type="entry name" value="Phosphoenolpyruvate Carboxykinase, domain 2"/>
    <property type="match status" value="1"/>
</dbReference>
<dbReference type="HAMAP" id="MF_00453">
    <property type="entry name" value="PEPCK_ATP"/>
    <property type="match status" value="1"/>
</dbReference>
<dbReference type="InterPro" id="IPR001272">
    <property type="entry name" value="PEP_carboxykinase_ATP"/>
</dbReference>
<dbReference type="InterPro" id="IPR013035">
    <property type="entry name" value="PEP_carboxykinase_C"/>
</dbReference>
<dbReference type="InterPro" id="IPR008210">
    <property type="entry name" value="PEP_carboxykinase_N"/>
</dbReference>
<dbReference type="InterPro" id="IPR015994">
    <property type="entry name" value="PEPCK_ATP_CS"/>
</dbReference>
<dbReference type="NCBIfam" id="TIGR00224">
    <property type="entry name" value="pckA"/>
    <property type="match status" value="1"/>
</dbReference>
<dbReference type="NCBIfam" id="NF006820">
    <property type="entry name" value="PRK09344.1-2"/>
    <property type="match status" value="1"/>
</dbReference>
<dbReference type="NCBIfam" id="NF006821">
    <property type="entry name" value="PRK09344.1-3"/>
    <property type="match status" value="1"/>
</dbReference>
<dbReference type="PANTHER" id="PTHR30031:SF0">
    <property type="entry name" value="PHOSPHOENOLPYRUVATE CARBOXYKINASE (ATP)"/>
    <property type="match status" value="1"/>
</dbReference>
<dbReference type="PANTHER" id="PTHR30031">
    <property type="entry name" value="PHOSPHOENOLPYRUVATE CARBOXYKINASE ATP"/>
    <property type="match status" value="1"/>
</dbReference>
<dbReference type="Pfam" id="PF01293">
    <property type="entry name" value="PEPCK_ATP"/>
    <property type="match status" value="1"/>
</dbReference>
<dbReference type="PIRSF" id="PIRSF006294">
    <property type="entry name" value="PEP_crbxkin"/>
    <property type="match status" value="1"/>
</dbReference>
<dbReference type="SUPFAM" id="SSF68923">
    <property type="entry name" value="PEP carboxykinase N-terminal domain"/>
    <property type="match status" value="1"/>
</dbReference>
<dbReference type="SUPFAM" id="SSF53795">
    <property type="entry name" value="PEP carboxykinase-like"/>
    <property type="match status" value="1"/>
</dbReference>
<dbReference type="PROSITE" id="PS00532">
    <property type="entry name" value="PEPCK_ATP"/>
    <property type="match status" value="1"/>
</dbReference>
<feature type="chain" id="PRO_0000203804" description="Phosphoenolpyruvate carboxykinase (ATP)">
    <location>
        <begin position="1"/>
        <end position="528"/>
    </location>
</feature>
<feature type="binding site" evidence="1">
    <location>
        <position position="56"/>
    </location>
    <ligand>
        <name>substrate</name>
    </ligand>
</feature>
<feature type="binding site" evidence="1">
    <location>
        <position position="192"/>
    </location>
    <ligand>
        <name>substrate</name>
    </ligand>
</feature>
<feature type="binding site" evidence="1">
    <location>
        <position position="198"/>
    </location>
    <ligand>
        <name>ATP</name>
        <dbReference type="ChEBI" id="CHEBI:30616"/>
    </ligand>
</feature>
<feature type="binding site" evidence="1">
    <location>
        <position position="198"/>
    </location>
    <ligand>
        <name>Mn(2+)</name>
        <dbReference type="ChEBI" id="CHEBI:29035"/>
    </ligand>
</feature>
<feature type="binding site" evidence="1">
    <location>
        <position position="198"/>
    </location>
    <ligand>
        <name>substrate</name>
    </ligand>
</feature>
<feature type="binding site" evidence="1">
    <location>
        <position position="217"/>
    </location>
    <ligand>
        <name>ATP</name>
        <dbReference type="ChEBI" id="CHEBI:30616"/>
    </ligand>
</feature>
<feature type="binding site" evidence="1">
    <location>
        <position position="217"/>
    </location>
    <ligand>
        <name>Mn(2+)</name>
        <dbReference type="ChEBI" id="CHEBI:29035"/>
    </ligand>
</feature>
<feature type="binding site" evidence="1">
    <location>
        <begin position="233"/>
        <end position="241"/>
    </location>
    <ligand>
        <name>ATP</name>
        <dbReference type="ChEBI" id="CHEBI:30616"/>
    </ligand>
</feature>
<feature type="binding site" evidence="1">
    <location>
        <position position="254"/>
    </location>
    <ligand>
        <name>Mn(2+)</name>
        <dbReference type="ChEBI" id="CHEBI:29035"/>
    </ligand>
</feature>
<feature type="binding site" evidence="1">
    <location>
        <position position="282"/>
    </location>
    <ligand>
        <name>ATP</name>
        <dbReference type="ChEBI" id="CHEBI:30616"/>
    </ligand>
</feature>
<feature type="binding site" evidence="1">
    <location>
        <position position="319"/>
    </location>
    <ligand>
        <name>ATP</name>
        <dbReference type="ChEBI" id="CHEBI:30616"/>
    </ligand>
</feature>
<feature type="binding site" evidence="1">
    <location>
        <position position="319"/>
    </location>
    <ligand>
        <name>substrate</name>
    </ligand>
</feature>
<feature type="binding site" evidence="1">
    <location>
        <position position="444"/>
    </location>
    <ligand>
        <name>ATP</name>
        <dbReference type="ChEBI" id="CHEBI:30616"/>
    </ligand>
</feature>